<sequence>MLDISNTTWDLSNQSVLQPLWDYLQQNHESSLRSPLFPVILSVSMYLVLVFFYTVLDLLAPTWPSIRRYQIHQDRTVTWSNIGSTLALTTYNHLLYIFPAAVAQWLWRPPIPLPREAPTLTAFLLGIVGCTVVFDFQYYLWHLLHHRVGWLYRTFHALHHQYRQTFSLVTQYLSAWELFSVGFWTTVDPLLLQCHCLTAWAFMLFNIWVSTEDHCGYDFPWAMHRLVPFGLWGGALRHDAHHQLPGTNFAPFFAHWDWLGGTATMPAPVKTKKRDDKEA</sequence>
<feature type="chain" id="PRO_0000397926" description="Cholesterol 25-hydroxylase-like protein 2">
    <location>
        <begin position="1"/>
        <end position="279"/>
    </location>
</feature>
<feature type="transmembrane region" evidence="2">
    <location>
        <begin position="36"/>
        <end position="56"/>
    </location>
</feature>
<feature type="transmembrane region" evidence="2">
    <location>
        <begin position="86"/>
        <end position="106"/>
    </location>
</feature>
<feature type="transmembrane region" evidence="2">
    <location>
        <begin position="120"/>
        <end position="140"/>
    </location>
</feature>
<feature type="transmembrane region" evidence="2">
    <location>
        <begin position="165"/>
        <end position="185"/>
    </location>
</feature>
<feature type="transmembrane region" evidence="2">
    <location>
        <begin position="189"/>
        <end position="209"/>
    </location>
</feature>
<feature type="domain" description="Fatty acid hydroxylase" evidence="2">
    <location>
        <begin position="128"/>
        <end position="262"/>
    </location>
</feature>
<feature type="short sequence motif" description="Histidine box-1" evidence="2">
    <location>
        <begin position="141"/>
        <end position="145"/>
    </location>
</feature>
<feature type="short sequence motif" description="Histidine box-2" evidence="2">
    <location>
        <begin position="156"/>
        <end position="160"/>
    </location>
</feature>
<feature type="short sequence motif" description="Histidine box-3" evidence="2">
    <location>
        <begin position="237"/>
        <end position="243"/>
    </location>
</feature>
<feature type="glycosylation site" description="N-linked (GlcNAc...) asparagine" evidence="2">
    <location>
        <position position="6"/>
    </location>
</feature>
<feature type="glycosylation site" description="N-linked (GlcNAc...) asparagine" evidence="2">
    <location>
        <position position="13"/>
    </location>
</feature>
<evidence type="ECO:0000250" key="1">
    <source>
        <dbReference type="UniProtKB" id="Q9Z0F5"/>
    </source>
</evidence>
<evidence type="ECO:0000255" key="2"/>
<evidence type="ECO:0000312" key="3">
    <source>
        <dbReference type="EMBL" id="AAI54838.1"/>
    </source>
</evidence>
<evidence type="ECO:0000312" key="4">
    <source>
        <dbReference type="ZFIN" id="ZDB-GENE-080204-82"/>
    </source>
</evidence>
<comment type="function">
    <text evidence="1">May catalyze the formation of 25-hydroxycholesterol from cholesterol.</text>
</comment>
<comment type="cofactor">
    <cofactor evidence="1">
        <name>Fe cation</name>
        <dbReference type="ChEBI" id="CHEBI:24875"/>
    </cofactor>
</comment>
<comment type="subcellular location">
    <subcellularLocation>
        <location evidence="1">Endoplasmic reticulum membrane</location>
        <topology evidence="1">Multi-pass membrane protein</topology>
    </subcellularLocation>
</comment>
<comment type="similarity">
    <text evidence="2">Belongs to the sterol desaturase family.</text>
</comment>
<gene>
    <name evidence="4" type="primary">ch25hl2</name>
    <name type="ORF">zgc:175201</name>
</gene>
<keyword id="KW-0256">Endoplasmic reticulum</keyword>
<keyword id="KW-0325">Glycoprotein</keyword>
<keyword id="KW-0408">Iron</keyword>
<keyword id="KW-0444">Lipid biosynthesis</keyword>
<keyword id="KW-0443">Lipid metabolism</keyword>
<keyword id="KW-0472">Membrane</keyword>
<keyword id="KW-0479">Metal-binding</keyword>
<keyword id="KW-0503">Monooxygenase</keyword>
<keyword id="KW-0560">Oxidoreductase</keyword>
<keyword id="KW-1185">Reference proteome</keyword>
<keyword id="KW-0752">Steroid biosynthesis</keyword>
<keyword id="KW-0753">Steroid metabolism</keyword>
<keyword id="KW-0756">Sterol biosynthesis</keyword>
<keyword id="KW-1207">Sterol metabolism</keyword>
<keyword id="KW-0812">Transmembrane</keyword>
<keyword id="KW-1133">Transmembrane helix</keyword>
<protein>
    <recommendedName>
        <fullName evidence="4">Cholesterol 25-hydroxylase-like protein 2</fullName>
        <ecNumber>1.14.99.-</ecNumber>
    </recommendedName>
</protein>
<dbReference type="EC" id="1.14.99.-"/>
<dbReference type="EMBL" id="BC154837">
    <property type="protein sequence ID" value="AAI54838.1"/>
    <property type="molecule type" value="mRNA"/>
</dbReference>
<dbReference type="RefSeq" id="NP_001108042.1">
    <property type="nucleotide sequence ID" value="NM_001114570.1"/>
</dbReference>
<dbReference type="FunCoup" id="A8WGT1">
    <property type="interactions" value="4"/>
</dbReference>
<dbReference type="STRING" id="7955.ENSDARP00000056559"/>
<dbReference type="GlyCosmos" id="A8WGT1">
    <property type="glycosylation" value="2 sites, No reported glycans"/>
</dbReference>
<dbReference type="PaxDb" id="7955-ENSDARP00000056559"/>
<dbReference type="Ensembl" id="ENSDART00000056560">
    <property type="protein sequence ID" value="ENSDARP00000056559"/>
    <property type="gene ID" value="ENSDARG00000038728"/>
</dbReference>
<dbReference type="GeneID" id="100136851"/>
<dbReference type="KEGG" id="dre:100136851"/>
<dbReference type="AGR" id="ZFIN:ZDB-GENE-080204-82"/>
<dbReference type="CTD" id="100136851"/>
<dbReference type="ZFIN" id="ZDB-GENE-080204-82">
    <property type="gene designation" value="ch25hl2"/>
</dbReference>
<dbReference type="eggNOG" id="KOG0873">
    <property type="taxonomic scope" value="Eukaryota"/>
</dbReference>
<dbReference type="HOGENOM" id="CLU_047036_5_1_1"/>
<dbReference type="InParanoid" id="A8WGT1"/>
<dbReference type="OMA" id="TTWGFMV"/>
<dbReference type="OrthoDB" id="1658724at2759"/>
<dbReference type="PhylomeDB" id="A8WGT1"/>
<dbReference type="TreeFam" id="TF314256"/>
<dbReference type="PRO" id="PR:A8WGT1"/>
<dbReference type="Proteomes" id="UP000000437">
    <property type="component" value="Chromosome 21"/>
</dbReference>
<dbReference type="Bgee" id="ENSDARG00000038728">
    <property type="expression patterns" value="Expressed in granulocyte and 9 other cell types or tissues"/>
</dbReference>
<dbReference type="ExpressionAtlas" id="A8WGT1">
    <property type="expression patterns" value="baseline"/>
</dbReference>
<dbReference type="GO" id="GO:0005789">
    <property type="term" value="C:endoplasmic reticulum membrane"/>
    <property type="evidence" value="ECO:0000318"/>
    <property type="project" value="GO_Central"/>
</dbReference>
<dbReference type="GO" id="GO:0000254">
    <property type="term" value="F:C-4 methylsterol oxidase activity"/>
    <property type="evidence" value="ECO:0000318"/>
    <property type="project" value="GO_Central"/>
</dbReference>
<dbReference type="GO" id="GO:0005506">
    <property type="term" value="F:iron ion binding"/>
    <property type="evidence" value="ECO:0007669"/>
    <property type="project" value="InterPro"/>
</dbReference>
<dbReference type="GO" id="GO:0008395">
    <property type="term" value="F:steroid hydroxylase activity"/>
    <property type="evidence" value="ECO:0000318"/>
    <property type="project" value="GO_Central"/>
</dbReference>
<dbReference type="GO" id="GO:0008203">
    <property type="term" value="P:cholesterol metabolic process"/>
    <property type="evidence" value="ECO:0000318"/>
    <property type="project" value="GO_Central"/>
</dbReference>
<dbReference type="GO" id="GO:0016126">
    <property type="term" value="P:sterol biosynthetic process"/>
    <property type="evidence" value="ECO:0000318"/>
    <property type="project" value="GO_Central"/>
</dbReference>
<dbReference type="InterPro" id="IPR006694">
    <property type="entry name" value="Fatty_acid_hydroxylase"/>
</dbReference>
<dbReference type="InterPro" id="IPR050307">
    <property type="entry name" value="Sterol_Desaturase_Related"/>
</dbReference>
<dbReference type="PANTHER" id="PTHR11863">
    <property type="entry name" value="STEROL DESATURASE"/>
    <property type="match status" value="1"/>
</dbReference>
<dbReference type="Pfam" id="PF04116">
    <property type="entry name" value="FA_hydroxylase"/>
    <property type="match status" value="1"/>
</dbReference>
<accession>A8WGT1</accession>
<reference evidence="3" key="1">
    <citation type="submission" date="2007-11" db="EMBL/GenBank/DDBJ databases">
        <authorList>
            <consortium name="NIH - Zebrafish Gene Collection (ZGC) project"/>
        </authorList>
    </citation>
    <scope>NUCLEOTIDE SEQUENCE [LARGE SCALE MRNA]</scope>
    <source>
        <tissue evidence="3">Embryo</tissue>
    </source>
</reference>
<name>C25L2_DANRE</name>
<organism>
    <name type="scientific">Danio rerio</name>
    <name type="common">Zebrafish</name>
    <name type="synonym">Brachydanio rerio</name>
    <dbReference type="NCBI Taxonomy" id="7955"/>
    <lineage>
        <taxon>Eukaryota</taxon>
        <taxon>Metazoa</taxon>
        <taxon>Chordata</taxon>
        <taxon>Craniata</taxon>
        <taxon>Vertebrata</taxon>
        <taxon>Euteleostomi</taxon>
        <taxon>Actinopterygii</taxon>
        <taxon>Neopterygii</taxon>
        <taxon>Teleostei</taxon>
        <taxon>Ostariophysi</taxon>
        <taxon>Cypriniformes</taxon>
        <taxon>Danionidae</taxon>
        <taxon>Danioninae</taxon>
        <taxon>Danio</taxon>
    </lineage>
</organism>
<proteinExistence type="evidence at transcript level"/>